<evidence type="ECO:0000255" key="1">
    <source>
        <dbReference type="HAMAP-Rule" id="MF_01569"/>
    </source>
</evidence>
<organism>
    <name type="scientific">Vibrio vulnificus (strain CMCP6)</name>
    <dbReference type="NCBI Taxonomy" id="216895"/>
    <lineage>
        <taxon>Bacteria</taxon>
        <taxon>Pseudomonadati</taxon>
        <taxon>Pseudomonadota</taxon>
        <taxon>Gammaproteobacteria</taxon>
        <taxon>Vibrionales</taxon>
        <taxon>Vibrionaceae</taxon>
        <taxon>Vibrio</taxon>
    </lineage>
</organism>
<feature type="chain" id="PRO_0000248811" description="Proline--tRNA ligase">
    <location>
        <begin position="1"/>
        <end position="571"/>
    </location>
</feature>
<name>SYP_VIBVU</name>
<dbReference type="EC" id="6.1.1.15" evidence="1"/>
<dbReference type="EMBL" id="AE016795">
    <property type="protein sequence ID" value="AAO10244.1"/>
    <property type="molecule type" value="Genomic_DNA"/>
</dbReference>
<dbReference type="RefSeq" id="WP_011079744.1">
    <property type="nucleotide sequence ID" value="NC_004459.3"/>
</dbReference>
<dbReference type="SMR" id="Q8DBH9"/>
<dbReference type="KEGG" id="vvu:VV1_1838"/>
<dbReference type="HOGENOM" id="CLU_016739_0_0_6"/>
<dbReference type="Proteomes" id="UP000002275">
    <property type="component" value="Chromosome 1"/>
</dbReference>
<dbReference type="GO" id="GO:0005829">
    <property type="term" value="C:cytosol"/>
    <property type="evidence" value="ECO:0007669"/>
    <property type="project" value="TreeGrafter"/>
</dbReference>
<dbReference type="GO" id="GO:0002161">
    <property type="term" value="F:aminoacyl-tRNA deacylase activity"/>
    <property type="evidence" value="ECO:0007669"/>
    <property type="project" value="InterPro"/>
</dbReference>
<dbReference type="GO" id="GO:0005524">
    <property type="term" value="F:ATP binding"/>
    <property type="evidence" value="ECO:0007669"/>
    <property type="project" value="UniProtKB-UniRule"/>
</dbReference>
<dbReference type="GO" id="GO:0004827">
    <property type="term" value="F:proline-tRNA ligase activity"/>
    <property type="evidence" value="ECO:0007669"/>
    <property type="project" value="UniProtKB-UniRule"/>
</dbReference>
<dbReference type="GO" id="GO:0006433">
    <property type="term" value="P:prolyl-tRNA aminoacylation"/>
    <property type="evidence" value="ECO:0007669"/>
    <property type="project" value="UniProtKB-UniRule"/>
</dbReference>
<dbReference type="CDD" id="cd04334">
    <property type="entry name" value="ProRS-INS"/>
    <property type="match status" value="1"/>
</dbReference>
<dbReference type="CDD" id="cd00861">
    <property type="entry name" value="ProRS_anticodon_short"/>
    <property type="match status" value="1"/>
</dbReference>
<dbReference type="CDD" id="cd00779">
    <property type="entry name" value="ProRS_core_prok"/>
    <property type="match status" value="1"/>
</dbReference>
<dbReference type="FunFam" id="3.30.930.10:FF:000043">
    <property type="entry name" value="Proline--tRNA ligase"/>
    <property type="match status" value="1"/>
</dbReference>
<dbReference type="FunFam" id="3.40.50.800:FF:000006">
    <property type="entry name" value="Proline--tRNA ligase"/>
    <property type="match status" value="1"/>
</dbReference>
<dbReference type="FunFam" id="3.90.960.10:FF:000001">
    <property type="entry name" value="Proline--tRNA ligase"/>
    <property type="match status" value="1"/>
</dbReference>
<dbReference type="Gene3D" id="3.40.50.800">
    <property type="entry name" value="Anticodon-binding domain"/>
    <property type="match status" value="1"/>
</dbReference>
<dbReference type="Gene3D" id="3.30.930.10">
    <property type="entry name" value="Bira Bifunctional Protein, Domain 2"/>
    <property type="match status" value="2"/>
</dbReference>
<dbReference type="Gene3D" id="3.90.960.10">
    <property type="entry name" value="YbaK/aminoacyl-tRNA synthetase-associated domain"/>
    <property type="match status" value="1"/>
</dbReference>
<dbReference type="HAMAP" id="MF_01569">
    <property type="entry name" value="Pro_tRNA_synth_type1"/>
    <property type="match status" value="1"/>
</dbReference>
<dbReference type="InterPro" id="IPR002314">
    <property type="entry name" value="aa-tRNA-synt_IIb"/>
</dbReference>
<dbReference type="InterPro" id="IPR006195">
    <property type="entry name" value="aa-tRNA-synth_II"/>
</dbReference>
<dbReference type="InterPro" id="IPR045864">
    <property type="entry name" value="aa-tRNA-synth_II/BPL/LPL"/>
</dbReference>
<dbReference type="InterPro" id="IPR004154">
    <property type="entry name" value="Anticodon-bd"/>
</dbReference>
<dbReference type="InterPro" id="IPR036621">
    <property type="entry name" value="Anticodon-bd_dom_sf"/>
</dbReference>
<dbReference type="InterPro" id="IPR002316">
    <property type="entry name" value="Pro-tRNA-ligase_IIa"/>
</dbReference>
<dbReference type="InterPro" id="IPR004500">
    <property type="entry name" value="Pro-tRNA-synth_IIa_bac-type"/>
</dbReference>
<dbReference type="InterPro" id="IPR023717">
    <property type="entry name" value="Pro-tRNA-Synthase_IIa_type1"/>
</dbReference>
<dbReference type="InterPro" id="IPR050062">
    <property type="entry name" value="Pro-tRNA_synthetase"/>
</dbReference>
<dbReference type="InterPro" id="IPR044140">
    <property type="entry name" value="ProRS_anticodon_short"/>
</dbReference>
<dbReference type="InterPro" id="IPR033730">
    <property type="entry name" value="ProRS_core_prok"/>
</dbReference>
<dbReference type="InterPro" id="IPR036754">
    <property type="entry name" value="YbaK/aa-tRNA-synt-asso_dom_sf"/>
</dbReference>
<dbReference type="InterPro" id="IPR007214">
    <property type="entry name" value="YbaK/aa-tRNA-synth-assoc-dom"/>
</dbReference>
<dbReference type="NCBIfam" id="NF006625">
    <property type="entry name" value="PRK09194.1"/>
    <property type="match status" value="1"/>
</dbReference>
<dbReference type="NCBIfam" id="TIGR00409">
    <property type="entry name" value="proS_fam_II"/>
    <property type="match status" value="1"/>
</dbReference>
<dbReference type="PANTHER" id="PTHR42753">
    <property type="entry name" value="MITOCHONDRIAL RIBOSOME PROTEIN L39/PROLYL-TRNA LIGASE FAMILY MEMBER"/>
    <property type="match status" value="1"/>
</dbReference>
<dbReference type="PANTHER" id="PTHR42753:SF2">
    <property type="entry name" value="PROLINE--TRNA LIGASE"/>
    <property type="match status" value="1"/>
</dbReference>
<dbReference type="Pfam" id="PF03129">
    <property type="entry name" value="HGTP_anticodon"/>
    <property type="match status" value="1"/>
</dbReference>
<dbReference type="Pfam" id="PF00587">
    <property type="entry name" value="tRNA-synt_2b"/>
    <property type="match status" value="1"/>
</dbReference>
<dbReference type="Pfam" id="PF04073">
    <property type="entry name" value="tRNA_edit"/>
    <property type="match status" value="1"/>
</dbReference>
<dbReference type="PIRSF" id="PIRSF001535">
    <property type="entry name" value="ProRS_1"/>
    <property type="match status" value="1"/>
</dbReference>
<dbReference type="PRINTS" id="PR01046">
    <property type="entry name" value="TRNASYNTHPRO"/>
</dbReference>
<dbReference type="SUPFAM" id="SSF52954">
    <property type="entry name" value="Class II aaRS ABD-related"/>
    <property type="match status" value="1"/>
</dbReference>
<dbReference type="SUPFAM" id="SSF55681">
    <property type="entry name" value="Class II aaRS and biotin synthetases"/>
    <property type="match status" value="1"/>
</dbReference>
<dbReference type="SUPFAM" id="SSF55826">
    <property type="entry name" value="YbaK/ProRS associated domain"/>
    <property type="match status" value="1"/>
</dbReference>
<dbReference type="PROSITE" id="PS50862">
    <property type="entry name" value="AA_TRNA_LIGASE_II"/>
    <property type="match status" value="1"/>
</dbReference>
<comment type="function">
    <text evidence="1">Catalyzes the attachment of proline to tRNA(Pro) in a two-step reaction: proline is first activated by ATP to form Pro-AMP and then transferred to the acceptor end of tRNA(Pro). As ProRS can inadvertently accommodate and process non-cognate amino acids such as alanine and cysteine, to avoid such errors it has two additional distinct editing activities against alanine. One activity is designated as 'pretransfer' editing and involves the tRNA(Pro)-independent hydrolysis of activated Ala-AMP. The other activity is designated 'posttransfer' editing and involves deacylation of mischarged Ala-tRNA(Pro). The misacylated Cys-tRNA(Pro) is not edited by ProRS.</text>
</comment>
<comment type="catalytic activity">
    <reaction evidence="1">
        <text>tRNA(Pro) + L-proline + ATP = L-prolyl-tRNA(Pro) + AMP + diphosphate</text>
        <dbReference type="Rhea" id="RHEA:14305"/>
        <dbReference type="Rhea" id="RHEA-COMP:9700"/>
        <dbReference type="Rhea" id="RHEA-COMP:9702"/>
        <dbReference type="ChEBI" id="CHEBI:30616"/>
        <dbReference type="ChEBI" id="CHEBI:33019"/>
        <dbReference type="ChEBI" id="CHEBI:60039"/>
        <dbReference type="ChEBI" id="CHEBI:78442"/>
        <dbReference type="ChEBI" id="CHEBI:78532"/>
        <dbReference type="ChEBI" id="CHEBI:456215"/>
        <dbReference type="EC" id="6.1.1.15"/>
    </reaction>
</comment>
<comment type="subunit">
    <text evidence="1">Homodimer.</text>
</comment>
<comment type="subcellular location">
    <subcellularLocation>
        <location evidence="1">Cytoplasm</location>
    </subcellularLocation>
</comment>
<comment type="domain">
    <text evidence="1">Consists of three domains: the N-terminal catalytic domain, the editing domain and the C-terminal anticodon-binding domain.</text>
</comment>
<comment type="similarity">
    <text evidence="1">Belongs to the class-II aminoacyl-tRNA synthetase family. ProS type 1 subfamily.</text>
</comment>
<protein>
    <recommendedName>
        <fullName evidence="1">Proline--tRNA ligase</fullName>
        <ecNumber evidence="1">6.1.1.15</ecNumber>
    </recommendedName>
    <alternativeName>
        <fullName evidence="1">Prolyl-tRNA synthetase</fullName>
        <shortName evidence="1">ProRS</shortName>
    </alternativeName>
</protein>
<reference key="1">
    <citation type="submission" date="2002-12" db="EMBL/GenBank/DDBJ databases">
        <title>Complete genome sequence of Vibrio vulnificus CMCP6.</title>
        <authorList>
            <person name="Rhee J.H."/>
            <person name="Kim S.Y."/>
            <person name="Chung S.S."/>
            <person name="Kim J.J."/>
            <person name="Moon Y.H."/>
            <person name="Jeong H."/>
            <person name="Choy H.E."/>
        </authorList>
    </citation>
    <scope>NUCLEOTIDE SEQUENCE [LARGE SCALE GENOMIC DNA]</scope>
    <source>
        <strain>CMCP6</strain>
    </source>
</reference>
<sequence>MRTSKYLLSTLKETPNDAEVVSHQLMLRAGMIRKLASGLYTWLPTGLRVLRKVENIVRQEIDNAGAIETLMPVVQPFELWEETGRSEKMGPELLRFTDRHVRPFVLSPTAEEVITALVRNEVSSYKQLPINLYQIQTKFRDERRPRFGVMRAREFCMMDAYSFDIDKAGLEKSYQAMHDAYCKAFDRMGLEYRPVLADSGAIGGNGSQEFHVLAESGEDLIAFSTESDYAANIEKAEAVAPAVERAAPTQEMTLVDTPNAKTIAELVEQHGIAIEKTVKTLFVKASDAIEAPIVALIIRGDHELNEIKAENLAEVATPLEMATEEEMRELIGAGAGSLGPVGLKLPFIVDRSVAVMSDFGAGANIDGKHYFGINWGRDVELGQVADLRNVVEGDPSPCGKGTLMLKRGIEVGHIFQLGNVYSEAMNCGVLDSNGKNVILEMGCYGIGVSRVVAAAIEQNNDKYGIIWPDALAPFQVAIVPMNMHKSERVQEAAEKLYAELTAMGIEVLFDDRKERPGVMFSDMELIGIPHTIVIGDRSMDEGHFEYKNRRSGEKTPVAMADIVEHIKAQLK</sequence>
<accession>Q8DBH9</accession>
<gene>
    <name evidence="1" type="primary">proS</name>
    <name type="ordered locus">VV1_1838</name>
</gene>
<proteinExistence type="inferred from homology"/>
<keyword id="KW-0030">Aminoacyl-tRNA synthetase</keyword>
<keyword id="KW-0067">ATP-binding</keyword>
<keyword id="KW-0963">Cytoplasm</keyword>
<keyword id="KW-0436">Ligase</keyword>
<keyword id="KW-0547">Nucleotide-binding</keyword>
<keyword id="KW-0648">Protein biosynthesis</keyword>